<evidence type="ECO:0000255" key="1">
    <source>
        <dbReference type="HAMAP-Rule" id="MF_00079"/>
    </source>
</evidence>
<accession>B7NQH1</accession>
<reference key="1">
    <citation type="journal article" date="2009" name="PLoS Genet.">
        <title>Organised genome dynamics in the Escherichia coli species results in highly diverse adaptive paths.</title>
        <authorList>
            <person name="Touchon M."/>
            <person name="Hoede C."/>
            <person name="Tenaillon O."/>
            <person name="Barbe V."/>
            <person name="Baeriswyl S."/>
            <person name="Bidet P."/>
            <person name="Bingen E."/>
            <person name="Bonacorsi S."/>
            <person name="Bouchier C."/>
            <person name="Bouvet O."/>
            <person name="Calteau A."/>
            <person name="Chiapello H."/>
            <person name="Clermont O."/>
            <person name="Cruveiller S."/>
            <person name="Danchin A."/>
            <person name="Diard M."/>
            <person name="Dossat C."/>
            <person name="Karoui M.E."/>
            <person name="Frapy E."/>
            <person name="Garry L."/>
            <person name="Ghigo J.M."/>
            <person name="Gilles A.M."/>
            <person name="Johnson J."/>
            <person name="Le Bouguenec C."/>
            <person name="Lescat M."/>
            <person name="Mangenot S."/>
            <person name="Martinez-Jehanne V."/>
            <person name="Matic I."/>
            <person name="Nassif X."/>
            <person name="Oztas S."/>
            <person name="Petit M.A."/>
            <person name="Pichon C."/>
            <person name="Rouy Z."/>
            <person name="Ruf C.S."/>
            <person name="Schneider D."/>
            <person name="Tourret J."/>
            <person name="Vacherie B."/>
            <person name="Vallenet D."/>
            <person name="Medigue C."/>
            <person name="Rocha E.P.C."/>
            <person name="Denamur E."/>
        </authorList>
    </citation>
    <scope>NUCLEOTIDE SEQUENCE [LARGE SCALE GENOMIC DNA]</scope>
    <source>
        <strain>IAI39 / ExPEC</strain>
    </source>
</reference>
<feature type="chain" id="PRO_1000117089" description="ATP phosphoribosyltransferase">
    <location>
        <begin position="1"/>
        <end position="299"/>
    </location>
</feature>
<keyword id="KW-0028">Amino-acid biosynthesis</keyword>
<keyword id="KW-0067">ATP-binding</keyword>
<keyword id="KW-0963">Cytoplasm</keyword>
<keyword id="KW-0328">Glycosyltransferase</keyword>
<keyword id="KW-0368">Histidine biosynthesis</keyword>
<keyword id="KW-0460">Magnesium</keyword>
<keyword id="KW-0479">Metal-binding</keyword>
<keyword id="KW-0547">Nucleotide-binding</keyword>
<keyword id="KW-0808">Transferase</keyword>
<dbReference type="EC" id="2.4.2.17" evidence="1"/>
<dbReference type="EMBL" id="CU928164">
    <property type="protein sequence ID" value="CAR17136.1"/>
    <property type="molecule type" value="Genomic_DNA"/>
</dbReference>
<dbReference type="RefSeq" id="WP_000131756.1">
    <property type="nucleotide sequence ID" value="NC_011750.1"/>
</dbReference>
<dbReference type="RefSeq" id="YP_002407021.1">
    <property type="nucleotide sequence ID" value="NC_011750.1"/>
</dbReference>
<dbReference type="SMR" id="B7NQH1"/>
<dbReference type="STRING" id="585057.ECIAI39_0999"/>
<dbReference type="KEGG" id="ect:ECIAI39_0999"/>
<dbReference type="PATRIC" id="fig|585057.6.peg.1048"/>
<dbReference type="HOGENOM" id="CLU_038115_1_0_6"/>
<dbReference type="UniPathway" id="UPA00031">
    <property type="reaction ID" value="UER00006"/>
</dbReference>
<dbReference type="Proteomes" id="UP000000749">
    <property type="component" value="Chromosome"/>
</dbReference>
<dbReference type="GO" id="GO:0005737">
    <property type="term" value="C:cytoplasm"/>
    <property type="evidence" value="ECO:0007669"/>
    <property type="project" value="UniProtKB-SubCell"/>
</dbReference>
<dbReference type="GO" id="GO:0005524">
    <property type="term" value="F:ATP binding"/>
    <property type="evidence" value="ECO:0007669"/>
    <property type="project" value="UniProtKB-KW"/>
</dbReference>
<dbReference type="GO" id="GO:0003879">
    <property type="term" value="F:ATP phosphoribosyltransferase activity"/>
    <property type="evidence" value="ECO:0007669"/>
    <property type="project" value="UniProtKB-UniRule"/>
</dbReference>
<dbReference type="GO" id="GO:0000287">
    <property type="term" value="F:magnesium ion binding"/>
    <property type="evidence" value="ECO:0007669"/>
    <property type="project" value="UniProtKB-UniRule"/>
</dbReference>
<dbReference type="GO" id="GO:0000105">
    <property type="term" value="P:L-histidine biosynthetic process"/>
    <property type="evidence" value="ECO:0007669"/>
    <property type="project" value="UniProtKB-UniRule"/>
</dbReference>
<dbReference type="CDD" id="cd13592">
    <property type="entry name" value="PBP2_HisGL2"/>
    <property type="match status" value="1"/>
</dbReference>
<dbReference type="FunFam" id="3.30.70.120:FF:000002">
    <property type="entry name" value="ATP phosphoribosyltransferase"/>
    <property type="match status" value="1"/>
</dbReference>
<dbReference type="FunFam" id="3.40.190.10:FF:000008">
    <property type="entry name" value="ATP phosphoribosyltransferase"/>
    <property type="match status" value="1"/>
</dbReference>
<dbReference type="Gene3D" id="3.30.70.120">
    <property type="match status" value="1"/>
</dbReference>
<dbReference type="Gene3D" id="3.40.190.10">
    <property type="entry name" value="Periplasmic binding protein-like II"/>
    <property type="match status" value="2"/>
</dbReference>
<dbReference type="HAMAP" id="MF_00079">
    <property type="entry name" value="HisG_Long"/>
    <property type="match status" value="1"/>
</dbReference>
<dbReference type="InterPro" id="IPR020621">
    <property type="entry name" value="ATP-PRT_HisG_long"/>
</dbReference>
<dbReference type="InterPro" id="IPR013820">
    <property type="entry name" value="ATP_PRibTrfase_cat"/>
</dbReference>
<dbReference type="InterPro" id="IPR018198">
    <property type="entry name" value="ATP_PRibTrfase_CS"/>
</dbReference>
<dbReference type="InterPro" id="IPR001348">
    <property type="entry name" value="ATP_PRibTrfase_HisG"/>
</dbReference>
<dbReference type="InterPro" id="IPR013115">
    <property type="entry name" value="HisG_C"/>
</dbReference>
<dbReference type="InterPro" id="IPR011322">
    <property type="entry name" value="N-reg_PII-like_a/b"/>
</dbReference>
<dbReference type="InterPro" id="IPR015867">
    <property type="entry name" value="N-reg_PII/ATP_PRibTrfase_C"/>
</dbReference>
<dbReference type="NCBIfam" id="TIGR00070">
    <property type="entry name" value="hisG"/>
    <property type="match status" value="1"/>
</dbReference>
<dbReference type="NCBIfam" id="TIGR03455">
    <property type="entry name" value="HisG_C-term"/>
    <property type="match status" value="1"/>
</dbReference>
<dbReference type="PANTHER" id="PTHR21403:SF8">
    <property type="entry name" value="ATP PHOSPHORIBOSYLTRANSFERASE"/>
    <property type="match status" value="1"/>
</dbReference>
<dbReference type="PANTHER" id="PTHR21403">
    <property type="entry name" value="ATP PHOSPHORIBOSYLTRANSFERASE ATP-PRTASE"/>
    <property type="match status" value="1"/>
</dbReference>
<dbReference type="Pfam" id="PF01634">
    <property type="entry name" value="HisG"/>
    <property type="match status" value="1"/>
</dbReference>
<dbReference type="Pfam" id="PF08029">
    <property type="entry name" value="HisG_C"/>
    <property type="match status" value="1"/>
</dbReference>
<dbReference type="SUPFAM" id="SSF54913">
    <property type="entry name" value="GlnB-like"/>
    <property type="match status" value="1"/>
</dbReference>
<dbReference type="SUPFAM" id="SSF53850">
    <property type="entry name" value="Periplasmic binding protein-like II"/>
    <property type="match status" value="1"/>
</dbReference>
<dbReference type="PROSITE" id="PS01316">
    <property type="entry name" value="ATP_P_PHORIBOSYLTR"/>
    <property type="match status" value="1"/>
</dbReference>
<proteinExistence type="inferred from homology"/>
<gene>
    <name evidence="1" type="primary">hisG</name>
    <name type="ordered locus">ECIAI39_0999</name>
</gene>
<organism>
    <name type="scientific">Escherichia coli O7:K1 (strain IAI39 / ExPEC)</name>
    <dbReference type="NCBI Taxonomy" id="585057"/>
    <lineage>
        <taxon>Bacteria</taxon>
        <taxon>Pseudomonadati</taxon>
        <taxon>Pseudomonadota</taxon>
        <taxon>Gammaproteobacteria</taxon>
        <taxon>Enterobacterales</taxon>
        <taxon>Enterobacteriaceae</taxon>
        <taxon>Escherichia</taxon>
    </lineage>
</organism>
<sequence length="299" mass="33353">MTDNSRLRIAMQKSGRLSDDSRELLARCGIKINLHTQRLIAMAENMPIDILRVRDDDIPGLVMDGVVDLGIIGENVLEEELLNRRAQGEDPRYFTLRRLDFGGCRLSLATPVDEAWDGPLSLNGKRIATSYPHLLKRYLDQKGISFKSCLLNGSVEVAPRAGLADAICDLVSTGATLEANGLREVEVIYRSKACLIQRDGEMEESKQQLIDKLLTRIQGVIQARESKYIMMHAPTERLDEVIALLPGAERPTILPLAGDQQRVAMHMVSSETLFWETMEKLKALGASSILVLPIEKMME</sequence>
<protein>
    <recommendedName>
        <fullName evidence="1">ATP phosphoribosyltransferase</fullName>
        <shortName evidence="1">ATP-PRT</shortName>
        <shortName evidence="1">ATP-PRTase</shortName>
        <ecNumber evidence="1">2.4.2.17</ecNumber>
    </recommendedName>
</protein>
<name>HIS1_ECO7I</name>
<comment type="function">
    <text evidence="1">Catalyzes the condensation of ATP and 5-phosphoribose 1-diphosphate to form N'-(5'-phosphoribosyl)-ATP (PR-ATP). Has a crucial role in the pathway because the rate of histidine biosynthesis seems to be controlled primarily by regulation of HisG enzymatic activity.</text>
</comment>
<comment type="catalytic activity">
    <reaction evidence="1">
        <text>1-(5-phospho-beta-D-ribosyl)-ATP + diphosphate = 5-phospho-alpha-D-ribose 1-diphosphate + ATP</text>
        <dbReference type="Rhea" id="RHEA:18473"/>
        <dbReference type="ChEBI" id="CHEBI:30616"/>
        <dbReference type="ChEBI" id="CHEBI:33019"/>
        <dbReference type="ChEBI" id="CHEBI:58017"/>
        <dbReference type="ChEBI" id="CHEBI:73183"/>
        <dbReference type="EC" id="2.4.2.17"/>
    </reaction>
</comment>
<comment type="cofactor">
    <cofactor evidence="1">
        <name>Mg(2+)</name>
        <dbReference type="ChEBI" id="CHEBI:18420"/>
    </cofactor>
</comment>
<comment type="activity regulation">
    <text evidence="1">Feedback inhibited by histidine.</text>
</comment>
<comment type="pathway">
    <text evidence="1">Amino-acid biosynthesis; L-histidine biosynthesis; L-histidine from 5-phospho-alpha-D-ribose 1-diphosphate: step 1/9.</text>
</comment>
<comment type="subunit">
    <text evidence="1">Equilibrium between an active dimeric form, an inactive hexameric form and higher aggregates. Interconversion between the various forms is largely reversible and is influenced by the natural substrates and inhibitors of the enzyme.</text>
</comment>
<comment type="subcellular location">
    <subcellularLocation>
        <location evidence="1">Cytoplasm</location>
    </subcellularLocation>
</comment>
<comment type="similarity">
    <text evidence="1">Belongs to the ATP phosphoribosyltransferase family. Long subfamily.</text>
</comment>